<keyword id="KW-0175">Coiled coil</keyword>
<keyword id="KW-0963">Cytoplasm</keyword>
<keyword id="KW-0967">Endosome</keyword>
<keyword id="KW-0472">Membrane</keyword>
<keyword id="KW-0653">Protein transport</keyword>
<keyword id="KW-1185">Reference proteome</keyword>
<keyword id="KW-0813">Transport</keyword>
<organism>
    <name type="scientific">Gallus gallus</name>
    <name type="common">Chicken</name>
    <dbReference type="NCBI Taxonomy" id="9031"/>
    <lineage>
        <taxon>Eukaryota</taxon>
        <taxon>Metazoa</taxon>
        <taxon>Chordata</taxon>
        <taxon>Craniata</taxon>
        <taxon>Vertebrata</taxon>
        <taxon>Euteleostomi</taxon>
        <taxon>Archelosauria</taxon>
        <taxon>Archosauria</taxon>
        <taxon>Dinosauria</taxon>
        <taxon>Saurischia</taxon>
        <taxon>Theropoda</taxon>
        <taxon>Coelurosauria</taxon>
        <taxon>Aves</taxon>
        <taxon>Neognathae</taxon>
        <taxon>Galloanserae</taxon>
        <taxon>Galliformes</taxon>
        <taxon>Phasianidae</taxon>
        <taxon>Phasianinae</taxon>
        <taxon>Gallus</taxon>
    </lineage>
</organism>
<reference key="1">
    <citation type="journal article" date="2005" name="Genome Biol.">
        <title>Full-length cDNAs from chicken bursal lymphocytes to facilitate gene function analysis.</title>
        <authorList>
            <person name="Caldwell R.B."/>
            <person name="Kierzek A.M."/>
            <person name="Arakawa H."/>
            <person name="Bezzubov Y."/>
            <person name="Zaim J."/>
            <person name="Fiedler P."/>
            <person name="Kutter S."/>
            <person name="Blagodatski A."/>
            <person name="Kostovska D."/>
            <person name="Koter M."/>
            <person name="Plachy J."/>
            <person name="Carninci P."/>
            <person name="Hayashizaki Y."/>
            <person name="Buerstedde J.-M."/>
        </authorList>
    </citation>
    <scope>NUCLEOTIDE SEQUENCE [LARGE SCALE MRNA]</scope>
    <source>
        <strain>CB</strain>
        <tissue>Bursa of Fabricius</tissue>
    </source>
</reference>
<gene>
    <name type="primary">CHMP4B</name>
    <name type="ORF">RCJMB04_34n7</name>
</gene>
<dbReference type="EMBL" id="AJ721089">
    <property type="protein sequence ID" value="CAG32748.1"/>
    <property type="molecule type" value="mRNA"/>
</dbReference>
<dbReference type="RefSeq" id="NP_001006286.1">
    <property type="nucleotide sequence ID" value="NM_001006286.2"/>
</dbReference>
<dbReference type="SMR" id="Q5ZHP5"/>
<dbReference type="BioGRID" id="680303">
    <property type="interactions" value="1"/>
</dbReference>
<dbReference type="FunCoup" id="Q5ZHP5">
    <property type="interactions" value="3066"/>
</dbReference>
<dbReference type="IntAct" id="Q5ZHP5">
    <property type="interactions" value="1"/>
</dbReference>
<dbReference type="STRING" id="9031.ENSGALP00000003263"/>
<dbReference type="PaxDb" id="9031-ENSGALP00000003263"/>
<dbReference type="Ensembl" id="ENSGALT00010059498.1">
    <property type="protein sequence ID" value="ENSGALP00010036328.1"/>
    <property type="gene ID" value="ENSGALG00010024392.1"/>
</dbReference>
<dbReference type="GeneID" id="419150"/>
<dbReference type="KEGG" id="gga:419150"/>
<dbReference type="CTD" id="128866"/>
<dbReference type="VEuPathDB" id="HostDB:geneid_419150"/>
<dbReference type="eggNOG" id="KOG1656">
    <property type="taxonomic scope" value="Eukaryota"/>
</dbReference>
<dbReference type="GeneTree" id="ENSGT00940000154663"/>
<dbReference type="HOGENOM" id="CLU_071097_0_0_1"/>
<dbReference type="InParanoid" id="Q5ZHP5"/>
<dbReference type="OMA" id="MKQIHGG"/>
<dbReference type="OrthoDB" id="5592979at2759"/>
<dbReference type="PhylomeDB" id="Q5ZHP5"/>
<dbReference type="TreeFam" id="TF314269"/>
<dbReference type="Reactome" id="R-GGA-1632852">
    <property type="pathway name" value="Macroautophagy"/>
</dbReference>
<dbReference type="Reactome" id="R-GGA-5620971">
    <property type="pathway name" value="Pyroptosis"/>
</dbReference>
<dbReference type="Reactome" id="R-GGA-917729">
    <property type="pathway name" value="Endosomal Sorting Complex Required For Transport (ESCRT)"/>
</dbReference>
<dbReference type="Reactome" id="R-GGA-9668328">
    <property type="pathway name" value="Sealing of the nuclear envelope (NE) by ESCRT-III"/>
</dbReference>
<dbReference type="PRO" id="PR:Q5ZHP5"/>
<dbReference type="Proteomes" id="UP000000539">
    <property type="component" value="Chromosome 20"/>
</dbReference>
<dbReference type="Bgee" id="ENSGALG00000002095">
    <property type="expression patterns" value="Expressed in ovary and 14 other cell types or tissues"/>
</dbReference>
<dbReference type="GO" id="GO:0009898">
    <property type="term" value="C:cytoplasmic side of plasma membrane"/>
    <property type="evidence" value="ECO:0000318"/>
    <property type="project" value="GO_Central"/>
</dbReference>
<dbReference type="GO" id="GO:0005829">
    <property type="term" value="C:cytosol"/>
    <property type="evidence" value="ECO:0007669"/>
    <property type="project" value="UniProtKB-SubCell"/>
</dbReference>
<dbReference type="GO" id="GO:0000815">
    <property type="term" value="C:ESCRT III complex"/>
    <property type="evidence" value="ECO:0000250"/>
    <property type="project" value="UniProtKB"/>
</dbReference>
<dbReference type="GO" id="GO:0031902">
    <property type="term" value="C:late endosome membrane"/>
    <property type="evidence" value="ECO:0007669"/>
    <property type="project" value="UniProtKB-SubCell"/>
</dbReference>
<dbReference type="GO" id="GO:0030496">
    <property type="term" value="C:midbody"/>
    <property type="evidence" value="ECO:0007669"/>
    <property type="project" value="UniProtKB-SubCell"/>
</dbReference>
<dbReference type="GO" id="GO:0005771">
    <property type="term" value="C:multivesicular body"/>
    <property type="evidence" value="ECO:0000318"/>
    <property type="project" value="GO_Central"/>
</dbReference>
<dbReference type="GO" id="GO:0005635">
    <property type="term" value="C:nuclear envelope"/>
    <property type="evidence" value="ECO:0000250"/>
    <property type="project" value="UniProtKB"/>
</dbReference>
<dbReference type="GO" id="GO:0010458">
    <property type="term" value="P:exit from mitosis"/>
    <property type="evidence" value="ECO:0000250"/>
    <property type="project" value="UniProtKB"/>
</dbReference>
<dbReference type="GO" id="GO:0032511">
    <property type="term" value="P:late endosome to vacuole transport via multivesicular body sorting pathway"/>
    <property type="evidence" value="ECO:0000318"/>
    <property type="project" value="GO_Central"/>
</dbReference>
<dbReference type="GO" id="GO:0090148">
    <property type="term" value="P:membrane fission"/>
    <property type="evidence" value="ECO:0000250"/>
    <property type="project" value="UniProtKB"/>
</dbReference>
<dbReference type="GO" id="GO:0000281">
    <property type="term" value="P:mitotic cytokinesis"/>
    <property type="evidence" value="ECO:0000250"/>
    <property type="project" value="UniProtKB"/>
</dbReference>
<dbReference type="GO" id="GO:0031468">
    <property type="term" value="P:nuclear membrane reassembly"/>
    <property type="evidence" value="ECO:0000250"/>
    <property type="project" value="UniProtKB"/>
</dbReference>
<dbReference type="GO" id="GO:0015031">
    <property type="term" value="P:protein transport"/>
    <property type="evidence" value="ECO:0007669"/>
    <property type="project" value="UniProtKB-KW"/>
</dbReference>
<dbReference type="GO" id="GO:0006900">
    <property type="term" value="P:vesicle budding from membrane"/>
    <property type="evidence" value="ECO:0000318"/>
    <property type="project" value="GO_Central"/>
</dbReference>
<dbReference type="FunFam" id="1.10.287.1060:FF:000001">
    <property type="entry name" value="Charged multivesicular body protein 4b"/>
    <property type="match status" value="1"/>
</dbReference>
<dbReference type="Gene3D" id="6.10.250.1710">
    <property type="match status" value="1"/>
</dbReference>
<dbReference type="Gene3D" id="1.10.287.1060">
    <property type="entry name" value="ESAT-6-like"/>
    <property type="match status" value="1"/>
</dbReference>
<dbReference type="InterPro" id="IPR005024">
    <property type="entry name" value="Snf7_fam"/>
</dbReference>
<dbReference type="PANTHER" id="PTHR22761">
    <property type="entry name" value="CHARGED MULTIVESICULAR BODY PROTEIN"/>
    <property type="match status" value="1"/>
</dbReference>
<dbReference type="PANTHER" id="PTHR22761:SF4">
    <property type="entry name" value="CHARGED MULTIVESICULAR BODY PROTEIN 4B"/>
    <property type="match status" value="1"/>
</dbReference>
<dbReference type="Pfam" id="PF03357">
    <property type="entry name" value="Snf7"/>
    <property type="match status" value="1"/>
</dbReference>
<protein>
    <recommendedName>
        <fullName>Charged multivesicular body protein 4b</fullName>
    </recommendedName>
    <alternativeName>
        <fullName>Chromatin-modifying protein 4b</fullName>
        <shortName>CHMP4b</shortName>
    </alternativeName>
</protein>
<sequence length="227" mass="25155">MSGILGKLFGAGAGGKGAGKGPSPQEAIQRLRDTEEMLSKKQEFLEKKIEQELAAARKHGTKNKRAALQALKRKKRYEKQLAQIDGTLSTIEFQREALENANTNTEVLKNMGFAAKAMKAAHDNMDIDKVDELMQDIAEQQELADEISTAISKPVGFGEEFDEDELMAELEELEQEELDKNLLEISGPETVPLPNVPSISIPSKPAKKKEEEEDDDMKELEAWAGNM</sequence>
<name>CHM4B_CHICK</name>
<comment type="function">
    <text evidence="1">Probable core component of the endosomal sorting required for transport complex III (ESCRT-III) which is involved in multivesicular bodies (MVBs) formation and sorting of endosomal cargo proteins into MVBs. MVBs contain intraluminal vesicles (ILVs) that are generated by invagination and scission from the limiting membrane of the endosome and mostly are delivered to lysosomes enabling degradation of membrane proteins, such as stimulated growth factor receptors, lysosomal enzymes and lipids (By similarity).</text>
</comment>
<comment type="subunit">
    <text evidence="1">Probable core component of the endosomal sorting required for transport complex III (ESCRT-III). ESCRT-III components are thought to multimerize to form a flat lattice on the perimeter membrane of the endosome (By similarity).</text>
</comment>
<comment type="subcellular location">
    <subcellularLocation>
        <location evidence="1">Cytoplasm</location>
        <location evidence="1">Cytosol</location>
    </subcellularLocation>
    <subcellularLocation>
        <location evidence="1">Late endosome membrane</location>
        <topology evidence="1">Peripheral membrane protein</topology>
    </subcellularLocation>
    <subcellularLocation>
        <location evidence="1">Midbody</location>
    </subcellularLocation>
</comment>
<comment type="similarity">
    <text evidence="4">Belongs to the SNF7 family.</text>
</comment>
<evidence type="ECO:0000250" key="1">
    <source>
        <dbReference type="UniProtKB" id="Q9H444"/>
    </source>
</evidence>
<evidence type="ECO:0000255" key="2"/>
<evidence type="ECO:0000256" key="3">
    <source>
        <dbReference type="SAM" id="MobiDB-lite"/>
    </source>
</evidence>
<evidence type="ECO:0000305" key="4"/>
<proteinExistence type="evidence at transcript level"/>
<accession>Q5ZHP5</accession>
<feature type="chain" id="PRO_0000211491" description="Charged multivesicular body protein 4b">
    <location>
        <begin position="1"/>
        <end position="227"/>
    </location>
</feature>
<feature type="region of interest" description="Disordered" evidence="3">
    <location>
        <begin position="1"/>
        <end position="26"/>
    </location>
</feature>
<feature type="region of interest" description="Disordered" evidence="3">
    <location>
        <begin position="186"/>
        <end position="227"/>
    </location>
</feature>
<feature type="coiled-coil region" evidence="2">
    <location>
        <begin position="25"/>
        <end position="185"/>
    </location>
</feature>
<feature type="compositionally biased region" description="Gly residues" evidence="3">
    <location>
        <begin position="9"/>
        <end position="20"/>
    </location>
</feature>